<feature type="chain" id="PRO_1000163963" description="Ornithine carbamoyltransferase">
    <location>
        <begin position="1"/>
        <end position="327"/>
    </location>
</feature>
<feature type="binding site" evidence="2">
    <location>
        <begin position="56"/>
        <end position="59"/>
    </location>
    <ligand>
        <name>carbamoyl phosphate</name>
        <dbReference type="ChEBI" id="CHEBI:58228"/>
    </ligand>
</feature>
<feature type="binding site" evidence="2">
    <location>
        <position position="83"/>
    </location>
    <ligand>
        <name>carbamoyl phosphate</name>
        <dbReference type="ChEBI" id="CHEBI:58228"/>
    </ligand>
</feature>
<feature type="binding site" evidence="2">
    <location>
        <position position="107"/>
    </location>
    <ligand>
        <name>carbamoyl phosphate</name>
        <dbReference type="ChEBI" id="CHEBI:58228"/>
    </ligand>
</feature>
<feature type="binding site" evidence="2">
    <location>
        <begin position="134"/>
        <end position="137"/>
    </location>
    <ligand>
        <name>carbamoyl phosphate</name>
        <dbReference type="ChEBI" id="CHEBI:58228"/>
    </ligand>
</feature>
<feature type="binding site" evidence="2">
    <location>
        <position position="166"/>
    </location>
    <ligand>
        <name>L-ornithine</name>
        <dbReference type="ChEBI" id="CHEBI:46911"/>
    </ligand>
</feature>
<feature type="binding site" evidence="2">
    <location>
        <position position="230"/>
    </location>
    <ligand>
        <name>L-ornithine</name>
        <dbReference type="ChEBI" id="CHEBI:46911"/>
    </ligand>
</feature>
<feature type="binding site" evidence="2">
    <location>
        <begin position="234"/>
        <end position="235"/>
    </location>
    <ligand>
        <name>L-ornithine</name>
        <dbReference type="ChEBI" id="CHEBI:46911"/>
    </ligand>
</feature>
<feature type="binding site" evidence="2">
    <location>
        <begin position="269"/>
        <end position="270"/>
    </location>
    <ligand>
        <name>carbamoyl phosphate</name>
        <dbReference type="ChEBI" id="CHEBI:58228"/>
    </ligand>
</feature>
<feature type="binding site" evidence="2">
    <location>
        <position position="314"/>
    </location>
    <ligand>
        <name>carbamoyl phosphate</name>
        <dbReference type="ChEBI" id="CHEBI:58228"/>
    </ligand>
</feature>
<evidence type="ECO:0000250" key="1"/>
<evidence type="ECO:0000255" key="2">
    <source>
        <dbReference type="HAMAP-Rule" id="MF_01109"/>
    </source>
</evidence>
<name>OTC_BORBZ</name>
<keyword id="KW-0056">Arginine metabolism</keyword>
<keyword id="KW-0963">Cytoplasm</keyword>
<keyword id="KW-0808">Transferase</keyword>
<proteinExistence type="inferred from homology"/>
<protein>
    <recommendedName>
        <fullName evidence="2">Ornithine carbamoyltransferase</fullName>
        <shortName evidence="2">OTCase</shortName>
        <ecNumber evidence="2">2.1.3.3</ecNumber>
    </recommendedName>
</protein>
<comment type="function">
    <text evidence="1">Reversibly catalyzes the transfer of the carbamoyl group from carbamoyl phosphate (CP) to the N(epsilon) atom of ornithine (ORN) to produce L-citrulline.</text>
</comment>
<comment type="catalytic activity">
    <reaction evidence="2">
        <text>carbamoyl phosphate + L-ornithine = L-citrulline + phosphate + H(+)</text>
        <dbReference type="Rhea" id="RHEA:19513"/>
        <dbReference type="ChEBI" id="CHEBI:15378"/>
        <dbReference type="ChEBI" id="CHEBI:43474"/>
        <dbReference type="ChEBI" id="CHEBI:46911"/>
        <dbReference type="ChEBI" id="CHEBI:57743"/>
        <dbReference type="ChEBI" id="CHEBI:58228"/>
        <dbReference type="EC" id="2.1.3.3"/>
    </reaction>
</comment>
<comment type="pathway">
    <text evidence="2">Amino-acid degradation; L-arginine degradation via ADI pathway; carbamoyl phosphate from L-arginine: step 2/2.</text>
</comment>
<comment type="subcellular location">
    <subcellularLocation>
        <location evidence="2">Cytoplasm</location>
    </subcellularLocation>
</comment>
<comment type="similarity">
    <text evidence="2">Belongs to the aspartate/ornithine carbamoyltransferase superfamily. OTCase family.</text>
</comment>
<dbReference type="EC" id="2.1.3.3" evidence="2"/>
<dbReference type="EMBL" id="CP001205">
    <property type="protein sequence ID" value="ACK75002.1"/>
    <property type="molecule type" value="Genomic_DNA"/>
</dbReference>
<dbReference type="SMR" id="B7J0T6"/>
<dbReference type="KEGG" id="bbz:BbuZS7_0872"/>
<dbReference type="HOGENOM" id="CLU_043846_3_1_12"/>
<dbReference type="UniPathway" id="UPA00254">
    <property type="reaction ID" value="UER00365"/>
</dbReference>
<dbReference type="Proteomes" id="UP000006901">
    <property type="component" value="Chromosome"/>
</dbReference>
<dbReference type="GO" id="GO:0005737">
    <property type="term" value="C:cytoplasm"/>
    <property type="evidence" value="ECO:0007669"/>
    <property type="project" value="UniProtKB-SubCell"/>
</dbReference>
<dbReference type="GO" id="GO:0016597">
    <property type="term" value="F:amino acid binding"/>
    <property type="evidence" value="ECO:0007669"/>
    <property type="project" value="InterPro"/>
</dbReference>
<dbReference type="GO" id="GO:0004585">
    <property type="term" value="F:ornithine carbamoyltransferase activity"/>
    <property type="evidence" value="ECO:0007669"/>
    <property type="project" value="UniProtKB-UniRule"/>
</dbReference>
<dbReference type="GO" id="GO:0042450">
    <property type="term" value="P:arginine biosynthetic process via ornithine"/>
    <property type="evidence" value="ECO:0007669"/>
    <property type="project" value="TreeGrafter"/>
</dbReference>
<dbReference type="GO" id="GO:0019547">
    <property type="term" value="P:arginine catabolic process to ornithine"/>
    <property type="evidence" value="ECO:0007669"/>
    <property type="project" value="UniProtKB-UniRule"/>
</dbReference>
<dbReference type="GO" id="GO:0019240">
    <property type="term" value="P:citrulline biosynthetic process"/>
    <property type="evidence" value="ECO:0007669"/>
    <property type="project" value="TreeGrafter"/>
</dbReference>
<dbReference type="FunFam" id="3.40.50.1370:FF:000008">
    <property type="entry name" value="Ornithine carbamoyltransferase"/>
    <property type="match status" value="1"/>
</dbReference>
<dbReference type="Gene3D" id="3.40.50.1370">
    <property type="entry name" value="Aspartate/ornithine carbamoyltransferase"/>
    <property type="match status" value="2"/>
</dbReference>
<dbReference type="HAMAP" id="MF_01109">
    <property type="entry name" value="OTCase"/>
    <property type="match status" value="1"/>
</dbReference>
<dbReference type="InterPro" id="IPR006132">
    <property type="entry name" value="Asp/Orn_carbamoyltranf_P-bd"/>
</dbReference>
<dbReference type="InterPro" id="IPR006130">
    <property type="entry name" value="Asp/Orn_carbamoylTrfase"/>
</dbReference>
<dbReference type="InterPro" id="IPR036901">
    <property type="entry name" value="Asp/Orn_carbamoylTrfase_sf"/>
</dbReference>
<dbReference type="InterPro" id="IPR006131">
    <property type="entry name" value="Asp_carbamoyltransf_Asp/Orn-bd"/>
</dbReference>
<dbReference type="InterPro" id="IPR002292">
    <property type="entry name" value="Orn/put_carbamltrans"/>
</dbReference>
<dbReference type="InterPro" id="IPR024904">
    <property type="entry name" value="OTCase_ArgI"/>
</dbReference>
<dbReference type="NCBIfam" id="TIGR00658">
    <property type="entry name" value="orni_carb_tr"/>
    <property type="match status" value="1"/>
</dbReference>
<dbReference type="NCBIfam" id="NF001986">
    <property type="entry name" value="PRK00779.1"/>
    <property type="match status" value="1"/>
</dbReference>
<dbReference type="NCBIfam" id="NF003286">
    <property type="entry name" value="PRK04284.1"/>
    <property type="match status" value="1"/>
</dbReference>
<dbReference type="PANTHER" id="PTHR45753:SF1">
    <property type="entry name" value="ORNITHINE CARBAMOYLTRANSFERASE, CATABOLIC"/>
    <property type="match status" value="1"/>
</dbReference>
<dbReference type="PANTHER" id="PTHR45753">
    <property type="entry name" value="ORNITHINE CARBAMOYLTRANSFERASE, MITOCHONDRIAL"/>
    <property type="match status" value="1"/>
</dbReference>
<dbReference type="Pfam" id="PF00185">
    <property type="entry name" value="OTCace"/>
    <property type="match status" value="1"/>
</dbReference>
<dbReference type="Pfam" id="PF02729">
    <property type="entry name" value="OTCace_N"/>
    <property type="match status" value="1"/>
</dbReference>
<dbReference type="PRINTS" id="PR00100">
    <property type="entry name" value="AOTCASE"/>
</dbReference>
<dbReference type="PRINTS" id="PR00102">
    <property type="entry name" value="OTCASE"/>
</dbReference>
<dbReference type="SUPFAM" id="SSF53671">
    <property type="entry name" value="Aspartate/ornithine carbamoyltransferase"/>
    <property type="match status" value="1"/>
</dbReference>
<dbReference type="PROSITE" id="PS00097">
    <property type="entry name" value="CARBAMOYLTRANSFERASE"/>
    <property type="match status" value="1"/>
</dbReference>
<gene>
    <name evidence="2" type="primary">arcB</name>
    <name type="ordered locus">BbuZS7_0872</name>
</gene>
<reference key="1">
    <citation type="journal article" date="2011" name="J. Bacteriol.">
        <title>Whole-genome sequences of thirteen isolates of Borrelia burgdorferi.</title>
        <authorList>
            <person name="Schutzer S.E."/>
            <person name="Fraser-Liggett C.M."/>
            <person name="Casjens S.R."/>
            <person name="Qiu W.G."/>
            <person name="Dunn J.J."/>
            <person name="Mongodin E.F."/>
            <person name="Luft B.J."/>
        </authorList>
    </citation>
    <scope>NUCLEOTIDE SEQUENCE [LARGE SCALE GENOMIC DNA]</scope>
    <source>
        <strain>ZS7</strain>
    </source>
</reference>
<organism>
    <name type="scientific">Borreliella burgdorferi (strain ZS7)</name>
    <name type="common">Borrelia burgdorferi</name>
    <dbReference type="NCBI Taxonomy" id="445985"/>
    <lineage>
        <taxon>Bacteria</taxon>
        <taxon>Pseudomonadati</taxon>
        <taxon>Spirochaetota</taxon>
        <taxon>Spirochaetia</taxon>
        <taxon>Spirochaetales</taxon>
        <taxon>Borreliaceae</taxon>
        <taxon>Borreliella</taxon>
    </lineage>
</organism>
<sequence>MYNLRNRSFLNLLDFTSKDIKYLLDLSINLKKSKYAGIEVQKLKGKNIVIIFEKDSTRTRCAFEIAAYDQGANITYLGSKGNQMGSKESMIDTARVLGRMYDAIGFRGFSQQTVECLANYSNVPVYNGLTDISHPTQILADLMTIKEHKGSLKGIKIVFCGDGRGNVANSLLKGCAIMGLDFRIFAPKELFPDPDLTLKARSLALESGGKITITDSKEEAVKCADVVYTDVWVSMGESNWEDRINLLKAYQVNKEIMCMAKDDAIFMHCLPAFHDLNTVIGKDIFDKYGLDGIEVTEEIFESKNSVVFDVAENRVHTIKAIMVSTLG</sequence>
<accession>B7J0T6</accession>